<gene>
    <name type="primary">dps</name>
    <name type="synonym">napA</name>
    <name type="ordered locus">jhp_0228</name>
</gene>
<accession>Q9ZMJ1</accession>
<proteinExistence type="inferred from homology"/>
<sequence>MKTFEILKHLQADAIVLFMKVHNFHWNVKGTDFFNVHKATEEIYEGFADMFDDLAERIVQLGHHPLVTLSEAIKLTRVKEETKTSFHSKDIFKEILEDYKHLEKEFKELSNTAEKEGDKVTVTYADDQLAKLQKSIWMLEAHLA</sequence>
<keyword id="KW-0963">Cytoplasm</keyword>
<keyword id="KW-0408">Iron</keyword>
<keyword id="KW-0409">Iron storage</keyword>
<keyword id="KW-0479">Metal-binding</keyword>
<keyword id="KW-0560">Oxidoreductase</keyword>
<keyword id="KW-0843">Virulence</keyword>
<comment type="function">
    <text evidence="1">Protects DNA from oxidative damage by sequestering intracellular Fe(2+) ion and storing it in the form of Fe(3+) oxyhydroxide mineral. One hydrogen peroxide oxidizes two Fe(2+) ions, which prevents hydroxyl radical production by the Fenton reaction. Required for the survival in the presence of oxidative stress. Dps is also a virulence factor that activates neutrophils, mast cells and monocytes. It binds to neutrophil-glycosphingolipids and to sulfated carbohydrates on mucin. It might have a role in the accumulation of neutrophils and monocytes at the site of infection. Induces superoxide anion generation, adhesion and chemotaxis of neutrophils, through a pertussis toxin-sensitive pathway involving MAP kinases (By similarity).</text>
</comment>
<comment type="catalytic activity">
    <reaction>
        <text>2 Fe(2+) + H2O2 + 2 H(+) = 2 Fe(3+) + 2 H2O</text>
        <dbReference type="Rhea" id="RHEA:48712"/>
        <dbReference type="ChEBI" id="CHEBI:15377"/>
        <dbReference type="ChEBI" id="CHEBI:15378"/>
        <dbReference type="ChEBI" id="CHEBI:16240"/>
        <dbReference type="ChEBI" id="CHEBI:29033"/>
        <dbReference type="ChEBI" id="CHEBI:29034"/>
    </reaction>
</comment>
<comment type="subunit">
    <text evidence="1">Homododecamer. The 12 subunits form a hollow sphere into which the mineral iron core of up to 500 Fe(3+) can be deposited (By similarity).</text>
</comment>
<comment type="subcellular location">
    <subcellularLocation>
        <location evidence="1">Cytoplasm</location>
    </subcellularLocation>
</comment>
<comment type="domain">
    <text evidence="1">12 di-nuclear ferroxidase centers are located at the interfaces between subunits related by 2-fold symmetry axes.</text>
</comment>
<comment type="similarity">
    <text evidence="3">Belongs to the Dps family.</text>
</comment>
<protein>
    <recommendedName>
        <fullName>DNA protection during starvation protein</fullName>
        <ecNumber>1.16.-.-</ecNumber>
    </recommendedName>
    <alternativeName>
        <fullName>Bacterioferritin</fullName>
    </alternativeName>
    <alternativeName>
        <fullName>HP-NAP</fullName>
    </alternativeName>
    <alternativeName>
        <fullName>Neutrophil-activating protein A</fullName>
        <shortName>NAP A</shortName>
    </alternativeName>
</protein>
<reference key="1">
    <citation type="journal article" date="1999" name="Nature">
        <title>Genomic sequence comparison of two unrelated isolates of the human gastric pathogen Helicobacter pylori.</title>
        <authorList>
            <person name="Alm R.A."/>
            <person name="Ling L.-S.L."/>
            <person name="Moir D.T."/>
            <person name="King B.L."/>
            <person name="Brown E.D."/>
            <person name="Doig P.C."/>
            <person name="Smith D.R."/>
            <person name="Noonan B."/>
            <person name="Guild B.C."/>
            <person name="deJonge B.L."/>
            <person name="Carmel G."/>
            <person name="Tummino P.J."/>
            <person name="Caruso A."/>
            <person name="Uria-Nickelsen M."/>
            <person name="Mills D.M."/>
            <person name="Ives C."/>
            <person name="Gibson R."/>
            <person name="Merberg D."/>
            <person name="Mills S.D."/>
            <person name="Jiang Q."/>
            <person name="Taylor D.E."/>
            <person name="Vovis G.F."/>
            <person name="Trust T.J."/>
        </authorList>
    </citation>
    <scope>NUCLEOTIDE SEQUENCE [LARGE SCALE GENOMIC DNA]</scope>
    <source>
        <strain>J99 / ATCC 700824</strain>
    </source>
</reference>
<name>DPS_HELPJ</name>
<feature type="chain" id="PRO_0000253332" description="DNA protection during starvation protein">
    <location>
        <begin position="1"/>
        <end position="144"/>
    </location>
</feature>
<feature type="binding site" evidence="1">
    <location>
        <position position="25"/>
    </location>
    <ligand>
        <name>Fe cation</name>
        <dbReference type="ChEBI" id="CHEBI:24875"/>
        <label>1</label>
        <note>ligand shared between two dodecameric partners</note>
    </ligand>
</feature>
<feature type="binding site" description="in other chain" evidence="1">
    <location>
        <position position="52"/>
    </location>
    <ligand>
        <name>Fe cation</name>
        <dbReference type="ChEBI" id="CHEBI:24875"/>
        <label>1</label>
        <note>ligand shared between two dodecameric partners</note>
    </ligand>
</feature>
<feature type="binding site" description="in other chain" evidence="1">
    <location>
        <position position="56"/>
    </location>
    <ligand>
        <name>Fe cation</name>
        <dbReference type="ChEBI" id="CHEBI:24875"/>
        <label>1</label>
        <note>ligand shared between two dodecameric partners</note>
    </ligand>
</feature>
<feature type="binding site" evidence="2">
    <location>
        <position position="56"/>
    </location>
    <ligand>
        <name>Fe cation</name>
        <dbReference type="ChEBI" id="CHEBI:24875"/>
        <label>2</label>
    </ligand>
</feature>
<dbReference type="EC" id="1.16.-.-"/>
<dbReference type="EMBL" id="AE001439">
    <property type="protein sequence ID" value="AAD05800.1"/>
    <property type="molecule type" value="Genomic_DNA"/>
</dbReference>
<dbReference type="PIR" id="G71959">
    <property type="entry name" value="G71959"/>
</dbReference>
<dbReference type="RefSeq" id="WP_000846480.1">
    <property type="nucleotide sequence ID" value="NC_000921.1"/>
</dbReference>
<dbReference type="SMR" id="Q9ZMJ1"/>
<dbReference type="KEGG" id="hpj:jhp_0228"/>
<dbReference type="PATRIC" id="fig|85963.30.peg.786"/>
<dbReference type="eggNOG" id="COG0783">
    <property type="taxonomic scope" value="Bacteria"/>
</dbReference>
<dbReference type="Proteomes" id="UP000000804">
    <property type="component" value="Chromosome"/>
</dbReference>
<dbReference type="GO" id="GO:0005737">
    <property type="term" value="C:cytoplasm"/>
    <property type="evidence" value="ECO:0007669"/>
    <property type="project" value="UniProtKB-SubCell"/>
</dbReference>
<dbReference type="GO" id="GO:0008199">
    <property type="term" value="F:ferric iron binding"/>
    <property type="evidence" value="ECO:0007669"/>
    <property type="project" value="InterPro"/>
</dbReference>
<dbReference type="GO" id="GO:0016722">
    <property type="term" value="F:oxidoreductase activity, acting on metal ions"/>
    <property type="evidence" value="ECO:0007669"/>
    <property type="project" value="InterPro"/>
</dbReference>
<dbReference type="GO" id="GO:0006879">
    <property type="term" value="P:intracellular iron ion homeostasis"/>
    <property type="evidence" value="ECO:0007669"/>
    <property type="project" value="UniProtKB-KW"/>
</dbReference>
<dbReference type="CDD" id="cd01043">
    <property type="entry name" value="DPS"/>
    <property type="match status" value="1"/>
</dbReference>
<dbReference type="Gene3D" id="1.20.1260.10">
    <property type="match status" value="1"/>
</dbReference>
<dbReference type="InterPro" id="IPR002177">
    <property type="entry name" value="DPS_DNA-bd"/>
</dbReference>
<dbReference type="InterPro" id="IPR023188">
    <property type="entry name" value="DPS_DNA-bd_CS"/>
</dbReference>
<dbReference type="InterPro" id="IPR012347">
    <property type="entry name" value="Ferritin-like"/>
</dbReference>
<dbReference type="InterPro" id="IPR009078">
    <property type="entry name" value="Ferritin-like_SF"/>
</dbReference>
<dbReference type="InterPro" id="IPR008331">
    <property type="entry name" value="Ferritin_DPS_dom"/>
</dbReference>
<dbReference type="PANTHER" id="PTHR42932">
    <property type="entry name" value="GENERAL STRESS PROTEIN 20U"/>
    <property type="match status" value="1"/>
</dbReference>
<dbReference type="PANTHER" id="PTHR42932:SF1">
    <property type="entry name" value="GENERAL STRESS PROTEIN 20U"/>
    <property type="match status" value="1"/>
</dbReference>
<dbReference type="Pfam" id="PF00210">
    <property type="entry name" value="Ferritin"/>
    <property type="match status" value="1"/>
</dbReference>
<dbReference type="PIRSF" id="PIRSF005900">
    <property type="entry name" value="Dps"/>
    <property type="match status" value="1"/>
</dbReference>
<dbReference type="PRINTS" id="PR01346">
    <property type="entry name" value="HELNAPAPROT"/>
</dbReference>
<dbReference type="SUPFAM" id="SSF47240">
    <property type="entry name" value="Ferritin-like"/>
    <property type="match status" value="1"/>
</dbReference>
<dbReference type="PROSITE" id="PS00818">
    <property type="entry name" value="DPS_1"/>
    <property type="match status" value="1"/>
</dbReference>
<dbReference type="PROSITE" id="PS00819">
    <property type="entry name" value="DPS_2"/>
    <property type="match status" value="1"/>
</dbReference>
<evidence type="ECO:0000250" key="1"/>
<evidence type="ECO:0000255" key="2"/>
<evidence type="ECO:0000305" key="3"/>
<organism>
    <name type="scientific">Helicobacter pylori (strain J99 / ATCC 700824)</name>
    <name type="common">Campylobacter pylori J99</name>
    <dbReference type="NCBI Taxonomy" id="85963"/>
    <lineage>
        <taxon>Bacteria</taxon>
        <taxon>Pseudomonadati</taxon>
        <taxon>Campylobacterota</taxon>
        <taxon>Epsilonproteobacteria</taxon>
        <taxon>Campylobacterales</taxon>
        <taxon>Helicobacteraceae</taxon>
        <taxon>Helicobacter</taxon>
    </lineage>
</organism>